<organism>
    <name type="scientific">Feline sarcoma virus (strain Snyder-Theilen)</name>
    <dbReference type="NCBI Taxonomy" id="11780"/>
    <lineage>
        <taxon>Viruses</taxon>
        <taxon>Riboviria</taxon>
        <taxon>Pararnavirae</taxon>
        <taxon>Artverviricota</taxon>
        <taxon>Revtraviricetes</taxon>
        <taxon>Ortervirales</taxon>
        <taxon>Retroviridae</taxon>
        <taxon>Orthoretrovirinae</taxon>
        <taxon>Gammaretrovirus</taxon>
    </lineage>
</organism>
<keyword id="KW-0067">ATP-binding</keyword>
<keyword id="KW-0418">Kinase</keyword>
<keyword id="KW-0547">Nucleotide-binding</keyword>
<keyword id="KW-0553">Oncogene</keyword>
<keyword id="KW-0597">Phosphoprotein</keyword>
<keyword id="KW-0727">SH2 domain</keyword>
<keyword id="KW-0808">Transferase</keyword>
<keyword id="KW-0829">Tyrosine-protein kinase</keyword>
<protein>
    <recommendedName>
        <fullName>Tyrosine-protein kinase transforming protein Fes</fullName>
        <ecNumber>2.7.10.2</ecNumber>
    </recommendedName>
</protein>
<organismHost>
    <name type="scientific">Felidae</name>
    <name type="common">cat family</name>
    <dbReference type="NCBI Taxonomy" id="9681"/>
</organismHost>
<evidence type="ECO:0000250" key="1"/>
<evidence type="ECO:0000255" key="2">
    <source>
        <dbReference type="PROSITE-ProRule" id="PRU00159"/>
    </source>
</evidence>
<evidence type="ECO:0000255" key="3">
    <source>
        <dbReference type="PROSITE-ProRule" id="PRU00191"/>
    </source>
</evidence>
<evidence type="ECO:0000255" key="4">
    <source>
        <dbReference type="PROSITE-ProRule" id="PRU10028"/>
    </source>
</evidence>
<evidence type="ECO:0000256" key="5">
    <source>
        <dbReference type="SAM" id="MobiDB-lite"/>
    </source>
</evidence>
<evidence type="ECO:0000305" key="6"/>
<proteinExistence type="inferred from homology"/>
<feature type="chain" id="PRO_0000088086" description="Tyrosine-protein kinase transforming protein Fes">
    <location>
        <begin position="1"/>
        <end position="477"/>
    </location>
</feature>
<feature type="domain" description="SH2" evidence="3">
    <location>
        <begin position="115"/>
        <end position="204"/>
    </location>
</feature>
<feature type="domain" description="Protein kinase" evidence="2">
    <location>
        <begin position="216"/>
        <end position="477"/>
    </location>
</feature>
<feature type="region of interest" description="Disordered" evidence="5">
    <location>
        <begin position="49"/>
        <end position="76"/>
    </location>
</feature>
<feature type="compositionally biased region" description="Basic and acidic residues" evidence="5">
    <location>
        <begin position="58"/>
        <end position="74"/>
    </location>
</feature>
<feature type="active site" description="Proton acceptor" evidence="2 4">
    <location>
        <position position="338"/>
    </location>
</feature>
<feature type="binding site" evidence="2">
    <location>
        <begin position="222"/>
        <end position="230"/>
    </location>
    <ligand>
        <name>ATP</name>
        <dbReference type="ChEBI" id="CHEBI:30616"/>
    </ligand>
</feature>
<feature type="binding site" evidence="2">
    <location>
        <position position="245"/>
    </location>
    <ligand>
        <name>ATP</name>
        <dbReference type="ChEBI" id="CHEBI:30616"/>
    </ligand>
</feature>
<feature type="modified residue" description="Phosphotyrosine; by autocatalysis" evidence="1">
    <location>
        <position position="368"/>
    </location>
</feature>
<comment type="catalytic activity">
    <reaction evidence="4">
        <text>L-tyrosyl-[protein] + ATP = O-phospho-L-tyrosyl-[protein] + ADP + H(+)</text>
        <dbReference type="Rhea" id="RHEA:10596"/>
        <dbReference type="Rhea" id="RHEA-COMP:10136"/>
        <dbReference type="Rhea" id="RHEA-COMP:20101"/>
        <dbReference type="ChEBI" id="CHEBI:15378"/>
        <dbReference type="ChEBI" id="CHEBI:30616"/>
        <dbReference type="ChEBI" id="CHEBI:46858"/>
        <dbReference type="ChEBI" id="CHEBI:61978"/>
        <dbReference type="ChEBI" id="CHEBI:456216"/>
        <dbReference type="EC" id="2.7.10.2"/>
    </reaction>
</comment>
<comment type="miscellaneous">
    <text>This protein is synthesized as a Gag-Fes polyprotein.</text>
</comment>
<comment type="similarity">
    <text evidence="2">Belongs to the protein kinase superfamily. Tyr protein kinase family. Fes/fps subfamily.</text>
</comment>
<comment type="sequence caution" evidence="6">
    <conflict type="erroneous initiation">
        <sequence resource="EMBL-CDS" id="AAA43046"/>
    </conflict>
</comment>
<sequence length="477" mass="53757">HPREQVQLLAKKQVLQEALQALQVALCSQAKLQAQRELLQAKLEQLGPGEPPPVLLLQDDRHSTSSSEQEREGGRTPTLEILKSHISGIFRPKFSLPPPLQLVPEVQKPLHEQLWYHGALPRAEVAELLTHSGDFLVRESQGKQEYVLSVLWDGQPRHFIIQSADNLYRPEGDGFASIPLLVDHLLRSQQPLTKKSGIVLNRAVPKDKWVLNHEDLVLGEQIGRGNFGEVFSGRLRADNTLVAVKSCRETLPPDIKAKFLQEAKILKQYSHPNIVRLIGVCTQKQPIYIVMELVQGGDFLTFLRTEGARLRMKTLLQMVGDAAAGMEYLESKCCIHRDLAARNCLVTEKNVLKISDFGMSREEADGVYAASGGLRLVPVKWTAPEALNYGRYSSESDVWSFGILLWETFSLGASPYPNLSNQQTREFVEKGGRLPCPELCPDAVFRLMEQCWAYEPGQRPSFSAFYQELQSIRKRHR</sequence>
<name>FES_FSVST</name>
<gene>
    <name type="primary">V-FES</name>
</gene>
<reference key="1">
    <citation type="journal article" date="1982" name="Cell">
        <title>Nucleotide sequences of feline retroviral oncogenes (v-fes) provide evidence for a family of tyrosine-specific protein kinase genes.</title>
        <authorList>
            <person name="Hampe A."/>
            <person name="Laprevotte I."/>
            <person name="Galibert F."/>
            <person name="Fedele L.A."/>
            <person name="Sherr C.J."/>
        </authorList>
    </citation>
    <scope>NUCLEOTIDE SEQUENCE [GENOMIC RNA]</scope>
</reference>
<dbReference type="EC" id="2.7.10.2"/>
<dbReference type="EMBL" id="J02088">
    <property type="protein sequence ID" value="AAA43046.2"/>
    <property type="status" value="ALT_INIT"/>
    <property type="molecule type" value="Genomic_RNA"/>
</dbReference>
<dbReference type="PIR" id="A00652">
    <property type="entry name" value="TVMVCS"/>
</dbReference>
<dbReference type="SMR" id="P00543"/>
<dbReference type="BRENDA" id="2.7.10.2">
    <property type="organism ID" value="2234"/>
</dbReference>
<dbReference type="GO" id="GO:0005524">
    <property type="term" value="F:ATP binding"/>
    <property type="evidence" value="ECO:0007669"/>
    <property type="project" value="UniProtKB-KW"/>
</dbReference>
<dbReference type="GO" id="GO:0004715">
    <property type="term" value="F:non-membrane spanning protein tyrosine kinase activity"/>
    <property type="evidence" value="ECO:0007669"/>
    <property type="project" value="UniProtKB-EC"/>
</dbReference>
<dbReference type="CDD" id="cd10361">
    <property type="entry name" value="SH2_Fps_family"/>
    <property type="match status" value="1"/>
</dbReference>
<dbReference type="FunFam" id="1.10.510.10:FF:000212">
    <property type="entry name" value="Tyrosine-protein kinase"/>
    <property type="match status" value="1"/>
</dbReference>
<dbReference type="FunFam" id="3.30.200.20:FF:000089">
    <property type="entry name" value="Tyrosine-protein kinase"/>
    <property type="match status" value="1"/>
</dbReference>
<dbReference type="FunFam" id="3.30.505.10:FF:000020">
    <property type="entry name" value="Tyrosine-protein kinase"/>
    <property type="match status" value="1"/>
</dbReference>
<dbReference type="Gene3D" id="1.10.287.160">
    <property type="entry name" value="HR1 repeat"/>
    <property type="match status" value="1"/>
</dbReference>
<dbReference type="Gene3D" id="3.30.200.20">
    <property type="entry name" value="Phosphorylase Kinase, domain 1"/>
    <property type="match status" value="1"/>
</dbReference>
<dbReference type="Gene3D" id="3.30.505.10">
    <property type="entry name" value="SH2 domain"/>
    <property type="match status" value="1"/>
</dbReference>
<dbReference type="Gene3D" id="1.10.510.10">
    <property type="entry name" value="Transferase(Phosphotransferase) domain 1"/>
    <property type="match status" value="1"/>
</dbReference>
<dbReference type="InterPro" id="IPR035849">
    <property type="entry name" value="Fes/Fps/Fer_SH2"/>
</dbReference>
<dbReference type="InterPro" id="IPR011009">
    <property type="entry name" value="Kinase-like_dom_sf"/>
</dbReference>
<dbReference type="InterPro" id="IPR050198">
    <property type="entry name" value="Non-receptor_tyrosine_kinases"/>
</dbReference>
<dbReference type="InterPro" id="IPR000719">
    <property type="entry name" value="Prot_kinase_dom"/>
</dbReference>
<dbReference type="InterPro" id="IPR017441">
    <property type="entry name" value="Protein_kinase_ATP_BS"/>
</dbReference>
<dbReference type="InterPro" id="IPR001245">
    <property type="entry name" value="Ser-Thr/Tyr_kinase_cat_dom"/>
</dbReference>
<dbReference type="InterPro" id="IPR000980">
    <property type="entry name" value="SH2"/>
</dbReference>
<dbReference type="InterPro" id="IPR036860">
    <property type="entry name" value="SH2_dom_sf"/>
</dbReference>
<dbReference type="InterPro" id="IPR008266">
    <property type="entry name" value="Tyr_kinase_AS"/>
</dbReference>
<dbReference type="InterPro" id="IPR020635">
    <property type="entry name" value="Tyr_kinase_cat_dom"/>
</dbReference>
<dbReference type="PANTHER" id="PTHR24418">
    <property type="entry name" value="TYROSINE-PROTEIN KINASE"/>
    <property type="match status" value="1"/>
</dbReference>
<dbReference type="Pfam" id="PF07714">
    <property type="entry name" value="PK_Tyr_Ser-Thr"/>
    <property type="match status" value="1"/>
</dbReference>
<dbReference type="Pfam" id="PF00017">
    <property type="entry name" value="SH2"/>
    <property type="match status" value="1"/>
</dbReference>
<dbReference type="PRINTS" id="PR00401">
    <property type="entry name" value="SH2DOMAIN"/>
</dbReference>
<dbReference type="PRINTS" id="PR00109">
    <property type="entry name" value="TYRKINASE"/>
</dbReference>
<dbReference type="SMART" id="SM00252">
    <property type="entry name" value="SH2"/>
    <property type="match status" value="1"/>
</dbReference>
<dbReference type="SMART" id="SM00219">
    <property type="entry name" value="TyrKc"/>
    <property type="match status" value="1"/>
</dbReference>
<dbReference type="SUPFAM" id="SSF56112">
    <property type="entry name" value="Protein kinase-like (PK-like)"/>
    <property type="match status" value="1"/>
</dbReference>
<dbReference type="SUPFAM" id="SSF55550">
    <property type="entry name" value="SH2 domain"/>
    <property type="match status" value="1"/>
</dbReference>
<dbReference type="PROSITE" id="PS00107">
    <property type="entry name" value="PROTEIN_KINASE_ATP"/>
    <property type="match status" value="1"/>
</dbReference>
<dbReference type="PROSITE" id="PS50011">
    <property type="entry name" value="PROTEIN_KINASE_DOM"/>
    <property type="match status" value="1"/>
</dbReference>
<dbReference type="PROSITE" id="PS00109">
    <property type="entry name" value="PROTEIN_KINASE_TYR"/>
    <property type="match status" value="1"/>
</dbReference>
<dbReference type="PROSITE" id="PS50001">
    <property type="entry name" value="SH2"/>
    <property type="match status" value="1"/>
</dbReference>
<accession>P00543</accession>